<reference key="1">
    <citation type="journal article" date="2009" name="PLoS Biol.">
        <title>Lineage-specific biology revealed by a finished genome assembly of the mouse.</title>
        <authorList>
            <person name="Church D.M."/>
            <person name="Goodstadt L."/>
            <person name="Hillier L.W."/>
            <person name="Zody M.C."/>
            <person name="Goldstein S."/>
            <person name="She X."/>
            <person name="Bult C.J."/>
            <person name="Agarwala R."/>
            <person name="Cherry J.L."/>
            <person name="DiCuccio M."/>
            <person name="Hlavina W."/>
            <person name="Kapustin Y."/>
            <person name="Meric P."/>
            <person name="Maglott D."/>
            <person name="Birtle Z."/>
            <person name="Marques A.C."/>
            <person name="Graves T."/>
            <person name="Zhou S."/>
            <person name="Teague B."/>
            <person name="Potamousis K."/>
            <person name="Churas C."/>
            <person name="Place M."/>
            <person name="Herschleb J."/>
            <person name="Runnheim R."/>
            <person name="Forrest D."/>
            <person name="Amos-Landgraf J."/>
            <person name="Schwartz D.C."/>
            <person name="Cheng Z."/>
            <person name="Lindblad-Toh K."/>
            <person name="Eichler E.E."/>
            <person name="Ponting C.P."/>
        </authorList>
    </citation>
    <scope>NUCLEOTIDE SEQUENCE [LARGE SCALE GENOMIC DNA]</scope>
    <source>
        <strain>C57BL/6J</strain>
    </source>
</reference>
<reference key="2">
    <citation type="submission" date="2005-07" db="EMBL/GenBank/DDBJ databases">
        <authorList>
            <person name="Mural R.J."/>
            <person name="Adams M.D."/>
            <person name="Myers E.W."/>
            <person name="Smith H.O."/>
            <person name="Venter J.C."/>
        </authorList>
    </citation>
    <scope>NUCLEOTIDE SEQUENCE [LARGE SCALE GENOMIC DNA]</scope>
</reference>
<reference key="3">
    <citation type="journal article" date="2004" name="Genome Res.">
        <title>The status, quality, and expansion of the NIH full-length cDNA project: the Mammalian Gene Collection (MGC).</title>
        <authorList>
            <consortium name="The MGC Project Team"/>
        </authorList>
    </citation>
    <scope>NUCLEOTIDE SEQUENCE [LARGE SCALE MRNA]</scope>
</reference>
<name>CCHCR_MOUSE</name>
<organism>
    <name type="scientific">Mus musculus</name>
    <name type="common">Mouse</name>
    <dbReference type="NCBI Taxonomy" id="10090"/>
    <lineage>
        <taxon>Eukaryota</taxon>
        <taxon>Metazoa</taxon>
        <taxon>Chordata</taxon>
        <taxon>Craniata</taxon>
        <taxon>Vertebrata</taxon>
        <taxon>Euteleostomi</taxon>
        <taxon>Mammalia</taxon>
        <taxon>Eutheria</taxon>
        <taxon>Euarchontoglires</taxon>
        <taxon>Glires</taxon>
        <taxon>Rodentia</taxon>
        <taxon>Myomorpha</taxon>
        <taxon>Muroidea</taxon>
        <taxon>Muridae</taxon>
        <taxon>Murinae</taxon>
        <taxon>Mus</taxon>
        <taxon>Mus</taxon>
    </lineage>
</organism>
<dbReference type="EMBL" id="CR974473">
    <property type="status" value="NOT_ANNOTATED_CDS"/>
    <property type="molecule type" value="Genomic_DNA"/>
</dbReference>
<dbReference type="EMBL" id="CH466559">
    <property type="protein sequence ID" value="EDL23219.1"/>
    <property type="molecule type" value="Genomic_DNA"/>
</dbReference>
<dbReference type="EMBL" id="BC031416">
    <property type="protein sequence ID" value="AAH31416.1"/>
    <property type="status" value="ALT_INIT"/>
    <property type="molecule type" value="mRNA"/>
</dbReference>
<dbReference type="CCDS" id="CCDS50090.1"/>
<dbReference type="RefSeq" id="NP_001359227.1">
    <property type="nucleotide sequence ID" value="NM_001372298.1"/>
</dbReference>
<dbReference type="RefSeq" id="NP_001359228.1">
    <property type="nucleotide sequence ID" value="NM_001372299.1"/>
</dbReference>
<dbReference type="RefSeq" id="NP_001359229.1">
    <property type="nucleotide sequence ID" value="NM_001372300.1"/>
</dbReference>
<dbReference type="RefSeq" id="NP_666360.2">
    <property type="nucleotide sequence ID" value="NM_146248.3"/>
</dbReference>
<dbReference type="SMR" id="Q8K2I2"/>
<dbReference type="BioGRID" id="232162">
    <property type="interactions" value="1"/>
</dbReference>
<dbReference type="FunCoup" id="Q8K2I2">
    <property type="interactions" value="770"/>
</dbReference>
<dbReference type="STRING" id="10090.ENSMUSP00000046612"/>
<dbReference type="iPTMnet" id="Q8K2I2"/>
<dbReference type="PhosphoSitePlus" id="Q8K2I2"/>
<dbReference type="PaxDb" id="10090-ENSMUSP00000046612"/>
<dbReference type="ProteomicsDB" id="265610"/>
<dbReference type="Pumba" id="Q8K2I2"/>
<dbReference type="Antibodypedia" id="53233">
    <property type="antibodies" value="98 antibodies from 22 providers"/>
</dbReference>
<dbReference type="Ensembl" id="ENSMUST00000045956.14">
    <property type="protein sequence ID" value="ENSMUSP00000046612.8"/>
    <property type="gene ID" value="ENSMUSG00000040312.15"/>
</dbReference>
<dbReference type="Ensembl" id="ENSMUST00000164242.9">
    <property type="protein sequence ID" value="ENSMUSP00000132028.3"/>
    <property type="gene ID" value="ENSMUSG00000040312.15"/>
</dbReference>
<dbReference type="GeneID" id="240084"/>
<dbReference type="KEGG" id="mmu:240084"/>
<dbReference type="UCSC" id="uc008chy.2">
    <property type="organism name" value="mouse"/>
</dbReference>
<dbReference type="AGR" id="MGI:2385321"/>
<dbReference type="CTD" id="54535"/>
<dbReference type="MGI" id="MGI:2385321">
    <property type="gene designation" value="Cchcr1"/>
</dbReference>
<dbReference type="VEuPathDB" id="HostDB:ENSMUSG00000040312"/>
<dbReference type="eggNOG" id="KOG3802">
    <property type="taxonomic scope" value="Eukaryota"/>
</dbReference>
<dbReference type="GeneTree" id="ENSGT00940000153251"/>
<dbReference type="HOGENOM" id="CLU_009996_0_0_1"/>
<dbReference type="InParanoid" id="Q8K2I2"/>
<dbReference type="OrthoDB" id="193258at2759"/>
<dbReference type="TreeFam" id="TF336947"/>
<dbReference type="BioGRID-ORCS" id="240084">
    <property type="hits" value="4 hits in 77 CRISPR screens"/>
</dbReference>
<dbReference type="ChiTaRS" id="Cchcr1">
    <property type="organism name" value="mouse"/>
</dbReference>
<dbReference type="PRO" id="PR:Q8K2I2"/>
<dbReference type="Proteomes" id="UP000000589">
    <property type="component" value="Chromosome 17"/>
</dbReference>
<dbReference type="RNAct" id="Q8K2I2">
    <property type="molecule type" value="protein"/>
</dbReference>
<dbReference type="Bgee" id="ENSMUSG00000040312">
    <property type="expression patterns" value="Expressed in spermatocyte and 125 other cell types or tissues"/>
</dbReference>
<dbReference type="ExpressionAtlas" id="Q8K2I2">
    <property type="expression patterns" value="baseline and differential"/>
</dbReference>
<dbReference type="GO" id="GO:0005814">
    <property type="term" value="C:centriole"/>
    <property type="evidence" value="ECO:0000250"/>
    <property type="project" value="UniProtKB"/>
</dbReference>
<dbReference type="GO" id="GO:0005737">
    <property type="term" value="C:cytoplasm"/>
    <property type="evidence" value="ECO:0000314"/>
    <property type="project" value="MGI"/>
</dbReference>
<dbReference type="GO" id="GO:0005634">
    <property type="term" value="C:nucleus"/>
    <property type="evidence" value="ECO:0007669"/>
    <property type="project" value="UniProtKB-SubCell"/>
</dbReference>
<dbReference type="GO" id="GO:0030154">
    <property type="term" value="P:cell differentiation"/>
    <property type="evidence" value="ECO:0007669"/>
    <property type="project" value="UniProtKB-KW"/>
</dbReference>
<dbReference type="GO" id="GO:0006611">
    <property type="term" value="P:protein export from nucleus"/>
    <property type="evidence" value="ECO:0000314"/>
    <property type="project" value="MGI"/>
</dbReference>
<dbReference type="InterPro" id="IPR009800">
    <property type="entry name" value="HCR"/>
</dbReference>
<dbReference type="PANTHER" id="PTHR46822">
    <property type="entry name" value="COILED-COIL ALPHA-HELICAL ROD PROTEIN 1"/>
    <property type="match status" value="1"/>
</dbReference>
<dbReference type="PANTHER" id="PTHR46822:SF1">
    <property type="entry name" value="COILED-COIL ALPHA-HELICAL ROD PROTEIN 1"/>
    <property type="match status" value="1"/>
</dbReference>
<dbReference type="Pfam" id="PF07111">
    <property type="entry name" value="HCR"/>
    <property type="match status" value="1"/>
</dbReference>
<gene>
    <name type="primary">Cchcr1</name>
    <name type="synonym">Hcr</name>
</gene>
<sequence length="770" mass="87105">MLPPSGFAGLVPPSHFQARPLPTLPRMAPTWASDVPLVQSPASQDVLERRLDAQRSTVTTWGQDFCGDGQGLGRRGRSLELGFSSALSQQAELISRQLQELRRLEEEVRSLRETSLQQKMRLETQAVELDALAVAEKAGQAEAEGLRTALAGAEMVRKNLEEAKHKELEEIQSLHQEQLSSLTQAHQKALDSLASKAEGLEKSLNSLETKRAGEAKQLAMAQKEADMLRNQLSKTQEELEAQVTLVESLRKYVGEQVLPEFPSQEWELERKELLDTLKHLKEDRADLQATVELLQVRVQSLTHMLALQEEELTRKIQPLDPLEPEFPKKCRSLLRNWREKVFALMVQLKAQDLQHRDSTSQLRIQVAELQEQVTSQSQEQAILQRALQDKTAQVEVERMSTKSLQMELDQAQEARRRQEQQIASAEEQLKFVVGAMNSTQAKLQSTMTRMDQAVARIPSLSNRLSYAVRKVHTIKGLMARKVALAQLRVESSPPSEAAPPLDTDLSVELEQLREERNRLDAELQLSAHLIQQEVGRAREQGEVERRRLIEVAQQLEQELQRAQESLASVGQQLEAARRGQQESTEEAASLRQELTQQQEIYGQALQEKVAEVETRLREQLSDTKRRLNEARREQAKAVVSLRQIQHKATQEKERNQELRRLQDEARKEEGQRLTRRVQELERDKNLMLQRLLAVLPSGVNKKCSPRSVESSSSESPAAASCKESVKGSLTVLLDNLQGLSEAISRDEDICVEDNQNTKKTKNPPSDPLLS</sequence>
<keyword id="KW-0175">Coiled coil</keyword>
<keyword id="KW-0963">Cytoplasm</keyword>
<keyword id="KW-0217">Developmental protein</keyword>
<keyword id="KW-0221">Differentiation</keyword>
<keyword id="KW-0539">Nucleus</keyword>
<keyword id="KW-1185">Reference proteome</keyword>
<feature type="chain" id="PRO_0000089417" description="Coiled-coil alpha-helical rod protein 1">
    <location>
        <begin position="1"/>
        <end position="770"/>
    </location>
</feature>
<feature type="region of interest" description="Disordered" evidence="3">
    <location>
        <begin position="573"/>
        <end position="592"/>
    </location>
</feature>
<feature type="region of interest" description="Disordered" evidence="3">
    <location>
        <begin position="641"/>
        <end position="672"/>
    </location>
</feature>
<feature type="region of interest" description="Disordered" evidence="3">
    <location>
        <begin position="700"/>
        <end position="721"/>
    </location>
</feature>
<feature type="region of interest" description="Disordered" evidence="3">
    <location>
        <begin position="744"/>
        <end position="770"/>
    </location>
</feature>
<feature type="coiled-coil region" evidence="2">
    <location>
        <begin position="56"/>
        <end position="289"/>
    </location>
</feature>
<feature type="coiled-coil region" evidence="2">
    <location>
        <begin position="334"/>
        <end position="420"/>
    </location>
</feature>
<feature type="coiled-coil region" evidence="2">
    <location>
        <begin position="476"/>
        <end position="669"/>
    </location>
</feature>
<feature type="compositionally biased region" description="Basic and acidic residues" evidence="3">
    <location>
        <begin position="648"/>
        <end position="672"/>
    </location>
</feature>
<feature type="compositionally biased region" description="Low complexity" evidence="3">
    <location>
        <begin position="701"/>
        <end position="721"/>
    </location>
</feature>
<feature type="sequence conflict" description="In Ref. 3; AAH31416." evidence="4" ref="3">
    <original>S</original>
    <variation>L</variation>
    <location>
        <position position="720"/>
    </location>
</feature>
<protein>
    <recommendedName>
        <fullName>Coiled-coil alpha-helical rod protein 1</fullName>
    </recommendedName>
    <alternativeName>
        <fullName>Alpha-helical coiled-coil rod protein</fullName>
    </alternativeName>
</protein>
<accession>Q8K2I2</accession>
<accession>G3UWG0</accession>
<proteinExistence type="evidence at transcript level"/>
<comment type="function">
    <text evidence="1">May be a regulator of keratinocyte proliferation or differentiation.</text>
</comment>
<comment type="subcellular location">
    <subcellularLocation>
        <location evidence="1">Cytoplasm</location>
    </subcellularLocation>
    <subcellularLocation>
        <location evidence="1">Nucleus</location>
    </subcellularLocation>
</comment>
<comment type="sequence caution" evidence="4">
    <conflict type="erroneous initiation">
        <sequence resource="EMBL-CDS" id="AAH31416"/>
    </conflict>
</comment>
<evidence type="ECO:0000250" key="1"/>
<evidence type="ECO:0000255" key="2"/>
<evidence type="ECO:0000256" key="3">
    <source>
        <dbReference type="SAM" id="MobiDB-lite"/>
    </source>
</evidence>
<evidence type="ECO:0000305" key="4"/>